<dbReference type="EMBL" id="M29691">
    <property type="protein sequence ID" value="AAA83367.1"/>
    <property type="molecule type" value="Genomic_DNA"/>
</dbReference>
<dbReference type="EMBL" id="D84432">
    <property type="protein sequence ID" value="BAA12533.1"/>
    <property type="molecule type" value="Genomic_DNA"/>
</dbReference>
<dbReference type="EMBL" id="AL009126">
    <property type="protein sequence ID" value="CAB14404.1"/>
    <property type="molecule type" value="Genomic_DNA"/>
</dbReference>
<dbReference type="PIR" id="B30338">
    <property type="entry name" value="B30338"/>
</dbReference>
<dbReference type="RefSeq" id="NP_390353.1">
    <property type="nucleotide sequence ID" value="NC_000964.3"/>
</dbReference>
<dbReference type="RefSeq" id="WP_004399124.1">
    <property type="nucleotide sequence ID" value="NZ_OZ025638.1"/>
</dbReference>
<dbReference type="SMR" id="P25953"/>
<dbReference type="FunCoup" id="P25953">
    <property type="interactions" value="225"/>
</dbReference>
<dbReference type="STRING" id="224308.BSU24730"/>
<dbReference type="TCDB" id="3.A.14.1.1">
    <property type="family name" value="the fimbrilin/protein exporter (fpe) family"/>
</dbReference>
<dbReference type="PaxDb" id="224308-BSU24730"/>
<dbReference type="EnsemblBacteria" id="CAB14404">
    <property type="protein sequence ID" value="CAB14404"/>
    <property type="gene ID" value="BSU_24730"/>
</dbReference>
<dbReference type="GeneID" id="938516"/>
<dbReference type="KEGG" id="bsu:BSU24730"/>
<dbReference type="PATRIC" id="fig|224308.179.peg.2691"/>
<dbReference type="eggNOG" id="COG2804">
    <property type="taxonomic scope" value="Bacteria"/>
</dbReference>
<dbReference type="InParanoid" id="P25953"/>
<dbReference type="OrthoDB" id="9808272at2"/>
<dbReference type="PhylomeDB" id="P25953"/>
<dbReference type="BioCyc" id="BSUB:BSU24730-MONOMER"/>
<dbReference type="Proteomes" id="UP000001570">
    <property type="component" value="Chromosome"/>
</dbReference>
<dbReference type="GO" id="GO:0005886">
    <property type="term" value="C:plasma membrane"/>
    <property type="evidence" value="ECO:0000318"/>
    <property type="project" value="GO_Central"/>
</dbReference>
<dbReference type="GO" id="GO:0005524">
    <property type="term" value="F:ATP binding"/>
    <property type="evidence" value="ECO:0007669"/>
    <property type="project" value="UniProtKB-KW"/>
</dbReference>
<dbReference type="GO" id="GO:0016887">
    <property type="term" value="F:ATP hydrolysis activity"/>
    <property type="evidence" value="ECO:0000318"/>
    <property type="project" value="GO_Central"/>
</dbReference>
<dbReference type="GO" id="GO:0030420">
    <property type="term" value="P:establishment of competence for transformation"/>
    <property type="evidence" value="ECO:0007669"/>
    <property type="project" value="UniProtKB-KW"/>
</dbReference>
<dbReference type="CDD" id="cd01129">
    <property type="entry name" value="PulE-GspE-like"/>
    <property type="match status" value="1"/>
</dbReference>
<dbReference type="FunFam" id="3.30.450.90:FF:000007">
    <property type="entry name" value="ComG operon protein 1"/>
    <property type="match status" value="1"/>
</dbReference>
<dbReference type="FunFam" id="3.40.50.300:FF:001478">
    <property type="entry name" value="Similar to late competence protein comGA"/>
    <property type="match status" value="1"/>
</dbReference>
<dbReference type="Gene3D" id="3.30.450.90">
    <property type="match status" value="1"/>
</dbReference>
<dbReference type="Gene3D" id="3.40.50.300">
    <property type="entry name" value="P-loop containing nucleotide triphosphate hydrolases"/>
    <property type="match status" value="1"/>
</dbReference>
<dbReference type="InterPro" id="IPR003593">
    <property type="entry name" value="AAA+_ATPase"/>
</dbReference>
<dbReference type="InterPro" id="IPR047667">
    <property type="entry name" value="ATPase_ComGA"/>
</dbReference>
<dbReference type="InterPro" id="IPR027417">
    <property type="entry name" value="P-loop_NTPase"/>
</dbReference>
<dbReference type="InterPro" id="IPR001482">
    <property type="entry name" value="T2SS/T4SS_dom"/>
</dbReference>
<dbReference type="NCBIfam" id="NF041000">
    <property type="entry name" value="ATPase_ComGA"/>
    <property type="match status" value="1"/>
</dbReference>
<dbReference type="PANTHER" id="PTHR30258:SF2">
    <property type="entry name" value="COMG OPERON PROTEIN 1"/>
    <property type="match status" value="1"/>
</dbReference>
<dbReference type="PANTHER" id="PTHR30258">
    <property type="entry name" value="TYPE II SECRETION SYSTEM PROTEIN GSPE-RELATED"/>
    <property type="match status" value="1"/>
</dbReference>
<dbReference type="Pfam" id="PF00437">
    <property type="entry name" value="T2SSE"/>
    <property type="match status" value="1"/>
</dbReference>
<dbReference type="SMART" id="SM00382">
    <property type="entry name" value="AAA"/>
    <property type="match status" value="1"/>
</dbReference>
<dbReference type="SUPFAM" id="SSF52540">
    <property type="entry name" value="P-loop containing nucleoside triphosphate hydrolases"/>
    <property type="match status" value="1"/>
</dbReference>
<dbReference type="PROSITE" id="PS00662">
    <property type="entry name" value="T2SP_E"/>
    <property type="match status" value="1"/>
</dbReference>
<evidence type="ECO:0000250" key="1">
    <source>
        <dbReference type="UniProtKB" id="Q8DN86"/>
    </source>
</evidence>
<evidence type="ECO:0000255" key="2"/>
<evidence type="ECO:0000269" key="3">
    <source>
    </source>
</evidence>
<evidence type="ECO:0000269" key="4">
    <source>
    </source>
</evidence>
<evidence type="ECO:0000269" key="5">
    <source>
    </source>
</evidence>
<evidence type="ECO:0000269" key="6">
    <source>
    </source>
</evidence>
<evidence type="ECO:0000269" key="7">
    <source>
    </source>
</evidence>
<evidence type="ECO:0000269" key="8">
    <source>
    </source>
</evidence>
<evidence type="ECO:0000305" key="9"/>
<sequence length="356" mass="40459">MDSIEKVSKNLIEEAYLTKASDIHIVPRERDAIIHFRVDHALLKKRDMKKEECVRLISHFKFLSAMDIGERRKPQNGSLTLKLKEGNVHLRMSTLPTINEESLVIRVMPQYNIPSIDKLSLFPKTGATLLSFLKHSHGMLIFTGPTGSGKTTTLYSLVQYAKKHFNRNIVTLEDPVETRDEDVLQVQVNEKAGVTYSAGLKAILRHDPDMIILGEIRDAETAEIAVRAAMTGHLVLTSLHTRDAKGAIYRLLEFGINMNEIEQTVIAIAAQRLVDLACPFCENGCSSVYCRQSRNTRRASVYELLYGKNLQQCIQEAKGNHANYQYQTLRQIIRKGIALGYLTTNNYDRWVYHEKD</sequence>
<reference key="1">
    <citation type="journal article" date="1989" name="J. Bacteriol.">
        <title>Nucleotide sequence and genetic organization of the Bacillus subtilis comG operon.</title>
        <authorList>
            <person name="Albano M."/>
            <person name="Breitling R."/>
            <person name="Dubnau D.A."/>
        </authorList>
    </citation>
    <scope>NUCLEOTIDE SEQUENCE [GENOMIC DNA]</scope>
</reference>
<reference key="2">
    <citation type="journal article" date="1996" name="Microbiology">
        <title>Systematic sequencing of the 283 kb 210 degrees-232 degrees region of the Bacillus subtilis genome containing the skin element and many sporulation genes.</title>
        <authorList>
            <person name="Mizuno M."/>
            <person name="Masuda S."/>
            <person name="Takemaru K."/>
            <person name="Hosono S."/>
            <person name="Sato T."/>
            <person name="Takeuchi M."/>
            <person name="Kobayashi Y."/>
        </authorList>
    </citation>
    <scope>NUCLEOTIDE SEQUENCE [GENOMIC DNA]</scope>
    <source>
        <strain>168 / JH642</strain>
    </source>
</reference>
<reference key="3">
    <citation type="journal article" date="1997" name="Nature">
        <title>The complete genome sequence of the Gram-positive bacterium Bacillus subtilis.</title>
        <authorList>
            <person name="Kunst F."/>
            <person name="Ogasawara N."/>
            <person name="Moszer I."/>
            <person name="Albertini A.M."/>
            <person name="Alloni G."/>
            <person name="Azevedo V."/>
            <person name="Bertero M.G."/>
            <person name="Bessieres P."/>
            <person name="Bolotin A."/>
            <person name="Borchert S."/>
            <person name="Borriss R."/>
            <person name="Boursier L."/>
            <person name="Brans A."/>
            <person name="Braun M."/>
            <person name="Brignell S.C."/>
            <person name="Bron S."/>
            <person name="Brouillet S."/>
            <person name="Bruschi C.V."/>
            <person name="Caldwell B."/>
            <person name="Capuano V."/>
            <person name="Carter N.M."/>
            <person name="Choi S.-K."/>
            <person name="Codani J.-J."/>
            <person name="Connerton I.F."/>
            <person name="Cummings N.J."/>
            <person name="Daniel R.A."/>
            <person name="Denizot F."/>
            <person name="Devine K.M."/>
            <person name="Duesterhoeft A."/>
            <person name="Ehrlich S.D."/>
            <person name="Emmerson P.T."/>
            <person name="Entian K.-D."/>
            <person name="Errington J."/>
            <person name="Fabret C."/>
            <person name="Ferrari E."/>
            <person name="Foulger D."/>
            <person name="Fritz C."/>
            <person name="Fujita M."/>
            <person name="Fujita Y."/>
            <person name="Fuma S."/>
            <person name="Galizzi A."/>
            <person name="Galleron N."/>
            <person name="Ghim S.-Y."/>
            <person name="Glaser P."/>
            <person name="Goffeau A."/>
            <person name="Golightly E.J."/>
            <person name="Grandi G."/>
            <person name="Guiseppi G."/>
            <person name="Guy B.J."/>
            <person name="Haga K."/>
            <person name="Haiech J."/>
            <person name="Harwood C.R."/>
            <person name="Henaut A."/>
            <person name="Hilbert H."/>
            <person name="Holsappel S."/>
            <person name="Hosono S."/>
            <person name="Hullo M.-F."/>
            <person name="Itaya M."/>
            <person name="Jones L.-M."/>
            <person name="Joris B."/>
            <person name="Karamata D."/>
            <person name="Kasahara Y."/>
            <person name="Klaerr-Blanchard M."/>
            <person name="Klein C."/>
            <person name="Kobayashi Y."/>
            <person name="Koetter P."/>
            <person name="Koningstein G."/>
            <person name="Krogh S."/>
            <person name="Kumano M."/>
            <person name="Kurita K."/>
            <person name="Lapidus A."/>
            <person name="Lardinois S."/>
            <person name="Lauber J."/>
            <person name="Lazarevic V."/>
            <person name="Lee S.-M."/>
            <person name="Levine A."/>
            <person name="Liu H."/>
            <person name="Masuda S."/>
            <person name="Mauel C."/>
            <person name="Medigue C."/>
            <person name="Medina N."/>
            <person name="Mellado R.P."/>
            <person name="Mizuno M."/>
            <person name="Moestl D."/>
            <person name="Nakai S."/>
            <person name="Noback M."/>
            <person name="Noone D."/>
            <person name="O'Reilly M."/>
            <person name="Ogawa K."/>
            <person name="Ogiwara A."/>
            <person name="Oudega B."/>
            <person name="Park S.-H."/>
            <person name="Parro V."/>
            <person name="Pohl T.M."/>
            <person name="Portetelle D."/>
            <person name="Porwollik S."/>
            <person name="Prescott A.M."/>
            <person name="Presecan E."/>
            <person name="Pujic P."/>
            <person name="Purnelle B."/>
            <person name="Rapoport G."/>
            <person name="Rey M."/>
            <person name="Reynolds S."/>
            <person name="Rieger M."/>
            <person name="Rivolta C."/>
            <person name="Rocha E."/>
            <person name="Roche B."/>
            <person name="Rose M."/>
            <person name="Sadaie Y."/>
            <person name="Sato T."/>
            <person name="Scanlan E."/>
            <person name="Schleich S."/>
            <person name="Schroeter R."/>
            <person name="Scoffone F."/>
            <person name="Sekiguchi J."/>
            <person name="Sekowska A."/>
            <person name="Seror S.J."/>
            <person name="Serror P."/>
            <person name="Shin B.-S."/>
            <person name="Soldo B."/>
            <person name="Sorokin A."/>
            <person name="Tacconi E."/>
            <person name="Takagi T."/>
            <person name="Takahashi H."/>
            <person name="Takemaru K."/>
            <person name="Takeuchi M."/>
            <person name="Tamakoshi A."/>
            <person name="Tanaka T."/>
            <person name="Terpstra P."/>
            <person name="Tognoni A."/>
            <person name="Tosato V."/>
            <person name="Uchiyama S."/>
            <person name="Vandenbol M."/>
            <person name="Vannier F."/>
            <person name="Vassarotti A."/>
            <person name="Viari A."/>
            <person name="Wambutt R."/>
            <person name="Wedler E."/>
            <person name="Wedler H."/>
            <person name="Weitzenegger T."/>
            <person name="Winters P."/>
            <person name="Wipat A."/>
            <person name="Yamamoto H."/>
            <person name="Yamane K."/>
            <person name="Yasumoto K."/>
            <person name="Yata K."/>
            <person name="Yoshida K."/>
            <person name="Yoshikawa H.-F."/>
            <person name="Zumstein E."/>
            <person name="Yoshikawa H."/>
            <person name="Danchin A."/>
        </authorList>
    </citation>
    <scope>NUCLEOTIDE SEQUENCE [LARGE SCALE GENOMIC DNA]</scope>
    <source>
        <strain>168</strain>
    </source>
</reference>
<reference key="4">
    <citation type="journal article" date="1998" name="J. Bacteriol.">
        <title>All seven comG open reading frames are required for DNA binding during transformation of competent Bacillus subtilis.</title>
        <authorList>
            <person name="Chung Y.S."/>
            <person name="Dubnau D.A."/>
        </authorList>
    </citation>
    <scope>FUNCTION</scope>
</reference>
<reference key="5">
    <citation type="journal article" date="1998" name="Mol. Microbiol.">
        <title>Cell surface localization and processing of the ComG proteins, required for DNA binding during transformation of Bacillus subtilis.</title>
        <authorList>
            <person name="Chung Y.S."/>
            <person name="Breidt F."/>
            <person name="Dubnau D.A."/>
        </authorList>
    </citation>
    <scope>SUBCELLULAR LOCATION</scope>
    <source>
        <strain>168</strain>
    </source>
</reference>
<reference key="6">
    <citation type="journal article" date="2002" name="Mol. Microbiol.">
        <title>Microarray analysis of the Bacillus subtilis K-state: genome-wide expression changes dependent on ComK.</title>
        <authorList>
            <person name="Berka R.M."/>
            <person name="Hahn J."/>
            <person name="Albano M."/>
            <person name="Draskovic I."/>
            <person name="Persuh M."/>
            <person name="Cui X."/>
            <person name="Sloma A."/>
            <person name="Widner W."/>
            <person name="Dubnau D."/>
        </authorList>
    </citation>
    <scope>DEVELOPMENTAL STAGE</scope>
    <scope>INDUCTION</scope>
    <source>
        <strain>168</strain>
    </source>
</reference>
<reference key="7">
    <citation type="journal article" date="2002" name="J. Bacteriol.">
        <title>Whole-genome analysis of genes regulated by the Bacillus subtilis competence transcription factor ComK.</title>
        <authorList>
            <person name="Ogura M."/>
            <person name="Yamaguchi H."/>
            <person name="Kobayashi K."/>
            <person name="Ogasawara N."/>
            <person name="Fujita Y."/>
            <person name="Tanaka T."/>
        </authorList>
    </citation>
    <scope>INDUCTION</scope>
    <source>
        <strain>168 / CU741</strain>
    </source>
</reference>
<reference key="8">
    <citation type="journal article" date="2005" name="Cell">
        <title>Transformation proteins and DNA uptake localize to the cell poles in Bacillus subtilis.</title>
        <authorList>
            <person name="Hahn J."/>
            <person name="Maier B."/>
            <person name="Haijema B.J."/>
            <person name="Sheetz M."/>
            <person name="Dubnau D."/>
        </authorList>
    </citation>
    <scope>SUBCELLULAR LOCATION</scope>
    <scope>DEVELOPMENTAL STAGE</scope>
    <scope>INDUCTION</scope>
    <scope>DISRUPTION PHENOTYPE</scope>
    <scope>MUTAGENESIS OF LYS-150</scope>
    <source>
        <strain>168</strain>
    </source>
</reference>
<reference key="9">
    <citation type="journal article" date="2007" name="Mol. Microbiol.">
        <title>Multiple interactions among the competence proteins of Bacillus subtilis.</title>
        <authorList>
            <person name="Kramer N."/>
            <person name="Hahn J."/>
            <person name="Dubnau D."/>
        </authorList>
    </citation>
    <scope>SUBCELLULAR LOCATION</scope>
    <scope>DEVELOPMENTAL STAGE</scope>
    <source>
        <strain>168</strain>
    </source>
</reference>
<feature type="chain" id="PRO_0000207293" description="Competence protein ComGA">
    <location>
        <begin position="1"/>
        <end position="356"/>
    </location>
</feature>
<feature type="binding site" evidence="2">
    <location>
        <begin position="144"/>
        <end position="151"/>
    </location>
    <ligand>
        <name>ATP</name>
        <dbReference type="ChEBI" id="CHEBI:30616"/>
    </ligand>
</feature>
<feature type="mutagenesis site" description="Cells no longer transformable but still undergo competence-associated growth arrest; protein localizes to the cell pole." evidence="5">
    <original>K</original>
    <variation>Q</variation>
    <location>
        <position position="150"/>
    </location>
</feature>
<gene>
    <name type="primary">comGA</name>
    <name type="synonym">comG1</name>
    <name type="ordered locus">BSU24730</name>
</gene>
<accession>P25953</accession>
<keyword id="KW-0067">ATP-binding</keyword>
<keyword id="KW-1003">Cell membrane</keyword>
<keyword id="KW-0178">Competence</keyword>
<keyword id="KW-0472">Membrane</keyword>
<keyword id="KW-0547">Nucleotide-binding</keyword>
<keyword id="KW-1185">Reference proteome</keyword>
<keyword id="KW-0813">Transport</keyword>
<proteinExistence type="evidence at protein level"/>
<protein>
    <recommendedName>
        <fullName evidence="1">Competence protein ComGA</fullName>
    </recommendedName>
    <alternativeName>
        <fullName evidence="9">ComG operon protein 1</fullName>
    </alternativeName>
</protein>
<organism>
    <name type="scientific">Bacillus subtilis (strain 168)</name>
    <dbReference type="NCBI Taxonomy" id="224308"/>
    <lineage>
        <taxon>Bacteria</taxon>
        <taxon>Bacillati</taxon>
        <taxon>Bacillota</taxon>
        <taxon>Bacilli</taxon>
        <taxon>Bacillales</taxon>
        <taxon>Bacillaceae</taxon>
        <taxon>Bacillus</taxon>
    </lineage>
</organism>
<name>COMGA_BACSU</name>
<comment type="function">
    <text evidence="7">Required for uptake of DNA by competent cells.</text>
</comment>
<comment type="subcellular location">
    <subcellularLocation>
        <location evidence="8">Cell membrane</location>
        <topology evidence="8">Peripheral membrane protein</topology>
        <orientation evidence="8">Cytoplasmic side</orientation>
    </subcellularLocation>
    <text evidence="5 6">Localizes mostly to the cell poles during the development of competence, this depends on comK. During competence a number of proteins (at least CoiA, ComFA, ComGA, DprA, RecA and SsbB) are thought to colocalize at the cell pole, when comFA is disrupted ComGA no longer accumulates (PubMed:16009133). Colocalizes with CoiA and DprA (PubMed:17630974). During development of competence ComGA and SsbB colocalize in discrete foci which accumulate at the cell poles and then delocalize without the overall levels of proteins decreasing, these processes are coincident with the timing of transformability and the site of DNA uptake (PubMed:16009133).</text>
</comment>
<comment type="developmental stage">
    <text evidence="3 5 6">Expressed in cells competent for DNA transformation; that is 5-15% of the population (PubMed:11918817, PubMed:16009133, PubMed:17630974).</text>
</comment>
<comment type="induction">
    <text evidence="3 4">Expression activated by ComK (PubMed:11918817, PubMed:11948146).</text>
</comment>
<comment type="disruption phenotype">
    <text evidence="5">Transformation deficient (PubMed:16009133).</text>
</comment>
<comment type="similarity">
    <text evidence="9">Belongs to the GSP E family.</text>
</comment>